<name>METH_VIBPA</name>
<accession>Q87L95</accession>
<dbReference type="EC" id="2.1.1.13"/>
<dbReference type="EMBL" id="BA000031">
    <property type="protein sequence ID" value="BAC60980.1"/>
    <property type="molecule type" value="Genomic_DNA"/>
</dbReference>
<dbReference type="RefSeq" id="NP_799096.1">
    <property type="nucleotide sequence ID" value="NC_004603.1"/>
</dbReference>
<dbReference type="RefSeq" id="WP_005453805.1">
    <property type="nucleotide sequence ID" value="NC_004603.1"/>
</dbReference>
<dbReference type="SMR" id="Q87L95"/>
<dbReference type="GeneID" id="1190262"/>
<dbReference type="KEGG" id="vpa:VP2717"/>
<dbReference type="PATRIC" id="fig|223926.6.peg.2612"/>
<dbReference type="eggNOG" id="COG0646">
    <property type="taxonomic scope" value="Bacteria"/>
</dbReference>
<dbReference type="eggNOG" id="COG1410">
    <property type="taxonomic scope" value="Bacteria"/>
</dbReference>
<dbReference type="HOGENOM" id="CLU_004914_2_2_6"/>
<dbReference type="UniPathway" id="UPA00051">
    <property type="reaction ID" value="UER00081"/>
</dbReference>
<dbReference type="Proteomes" id="UP000002493">
    <property type="component" value="Chromosome 1"/>
</dbReference>
<dbReference type="GO" id="GO:0005829">
    <property type="term" value="C:cytosol"/>
    <property type="evidence" value="ECO:0007669"/>
    <property type="project" value="TreeGrafter"/>
</dbReference>
<dbReference type="GO" id="GO:0031419">
    <property type="term" value="F:cobalamin binding"/>
    <property type="evidence" value="ECO:0007669"/>
    <property type="project" value="UniProtKB-KW"/>
</dbReference>
<dbReference type="GO" id="GO:0008705">
    <property type="term" value="F:methionine synthase activity"/>
    <property type="evidence" value="ECO:0007669"/>
    <property type="project" value="UniProtKB-EC"/>
</dbReference>
<dbReference type="GO" id="GO:0008270">
    <property type="term" value="F:zinc ion binding"/>
    <property type="evidence" value="ECO:0007669"/>
    <property type="project" value="InterPro"/>
</dbReference>
<dbReference type="GO" id="GO:0050667">
    <property type="term" value="P:homocysteine metabolic process"/>
    <property type="evidence" value="ECO:0007669"/>
    <property type="project" value="TreeGrafter"/>
</dbReference>
<dbReference type="GO" id="GO:0032259">
    <property type="term" value="P:methylation"/>
    <property type="evidence" value="ECO:0007669"/>
    <property type="project" value="UniProtKB-KW"/>
</dbReference>
<dbReference type="GO" id="GO:0046653">
    <property type="term" value="P:tetrahydrofolate metabolic process"/>
    <property type="evidence" value="ECO:0007669"/>
    <property type="project" value="TreeGrafter"/>
</dbReference>
<dbReference type="CDD" id="cd02069">
    <property type="entry name" value="methionine_synthase_B12_BD"/>
    <property type="match status" value="1"/>
</dbReference>
<dbReference type="CDD" id="cd00740">
    <property type="entry name" value="MeTr"/>
    <property type="match status" value="1"/>
</dbReference>
<dbReference type="FunFam" id="1.10.1240.10:FF:000001">
    <property type="entry name" value="Methionine synthase"/>
    <property type="match status" value="1"/>
</dbReference>
<dbReference type="FunFam" id="3.20.20.20:FF:000002">
    <property type="entry name" value="Methionine synthase"/>
    <property type="match status" value="1"/>
</dbReference>
<dbReference type="FunFam" id="3.20.20.330:FF:000001">
    <property type="entry name" value="Methionine synthase"/>
    <property type="match status" value="1"/>
</dbReference>
<dbReference type="FunFam" id="3.40.50.280:FF:000001">
    <property type="entry name" value="Methionine synthase"/>
    <property type="match status" value="1"/>
</dbReference>
<dbReference type="Gene3D" id="3.40.50.280">
    <property type="entry name" value="Cobalamin-binding domain"/>
    <property type="match status" value="1"/>
</dbReference>
<dbReference type="Gene3D" id="1.10.288.10">
    <property type="entry name" value="Cobalamin-dependent Methionine Synthase, domain 2"/>
    <property type="match status" value="1"/>
</dbReference>
<dbReference type="Gene3D" id="3.20.20.20">
    <property type="entry name" value="Dihydropteroate synthase-like"/>
    <property type="match status" value="1"/>
</dbReference>
<dbReference type="Gene3D" id="3.20.20.330">
    <property type="entry name" value="Homocysteine-binding-like domain"/>
    <property type="match status" value="1"/>
</dbReference>
<dbReference type="Gene3D" id="1.10.1240.10">
    <property type="entry name" value="Methionine synthase domain"/>
    <property type="match status" value="1"/>
</dbReference>
<dbReference type="Gene3D" id="3.10.196.10">
    <property type="entry name" value="Vitamin B12-dependent methionine synthase, activation domain"/>
    <property type="match status" value="1"/>
</dbReference>
<dbReference type="InterPro" id="IPR003759">
    <property type="entry name" value="Cbl-bd_cap"/>
</dbReference>
<dbReference type="InterPro" id="IPR006158">
    <property type="entry name" value="Cobalamin-bd"/>
</dbReference>
<dbReference type="InterPro" id="IPR036724">
    <property type="entry name" value="Cobalamin-bd_sf"/>
</dbReference>
<dbReference type="InterPro" id="IPR011005">
    <property type="entry name" value="Dihydropteroate_synth-like_sf"/>
</dbReference>
<dbReference type="InterPro" id="IPR003726">
    <property type="entry name" value="HCY_dom"/>
</dbReference>
<dbReference type="InterPro" id="IPR036589">
    <property type="entry name" value="HCY_dom_sf"/>
</dbReference>
<dbReference type="InterPro" id="IPR050554">
    <property type="entry name" value="Met_Synthase/Corrinoid"/>
</dbReference>
<dbReference type="InterPro" id="IPR033706">
    <property type="entry name" value="Met_synthase_B12-bd"/>
</dbReference>
<dbReference type="InterPro" id="IPR011822">
    <property type="entry name" value="MetH"/>
</dbReference>
<dbReference type="InterPro" id="IPR036594">
    <property type="entry name" value="Meth_synthase_dom"/>
</dbReference>
<dbReference type="InterPro" id="IPR000489">
    <property type="entry name" value="Pterin-binding_dom"/>
</dbReference>
<dbReference type="InterPro" id="IPR004223">
    <property type="entry name" value="VitB12-dep_Met_synth_activ_dom"/>
</dbReference>
<dbReference type="InterPro" id="IPR037010">
    <property type="entry name" value="VitB12-dep_Met_synth_activ_sf"/>
</dbReference>
<dbReference type="NCBIfam" id="TIGR02082">
    <property type="entry name" value="metH"/>
    <property type="match status" value="1"/>
</dbReference>
<dbReference type="NCBIfam" id="NF007024">
    <property type="entry name" value="PRK09490.1"/>
    <property type="match status" value="1"/>
</dbReference>
<dbReference type="PANTHER" id="PTHR45833">
    <property type="entry name" value="METHIONINE SYNTHASE"/>
    <property type="match status" value="1"/>
</dbReference>
<dbReference type="PANTHER" id="PTHR45833:SF1">
    <property type="entry name" value="METHIONINE SYNTHASE"/>
    <property type="match status" value="1"/>
</dbReference>
<dbReference type="Pfam" id="PF02310">
    <property type="entry name" value="B12-binding"/>
    <property type="match status" value="1"/>
</dbReference>
<dbReference type="Pfam" id="PF02607">
    <property type="entry name" value="B12-binding_2"/>
    <property type="match status" value="1"/>
</dbReference>
<dbReference type="Pfam" id="PF02965">
    <property type="entry name" value="Met_synt_B12"/>
    <property type="match status" value="1"/>
</dbReference>
<dbReference type="Pfam" id="PF00809">
    <property type="entry name" value="Pterin_bind"/>
    <property type="match status" value="1"/>
</dbReference>
<dbReference type="Pfam" id="PF02574">
    <property type="entry name" value="S-methyl_trans"/>
    <property type="match status" value="1"/>
</dbReference>
<dbReference type="PIRSF" id="PIRSF000381">
    <property type="entry name" value="MetH"/>
    <property type="match status" value="1"/>
</dbReference>
<dbReference type="SMART" id="SM01018">
    <property type="entry name" value="B12-binding_2"/>
    <property type="match status" value="1"/>
</dbReference>
<dbReference type="SUPFAM" id="SSF52242">
    <property type="entry name" value="Cobalamin (vitamin B12)-binding domain"/>
    <property type="match status" value="1"/>
</dbReference>
<dbReference type="SUPFAM" id="SSF51717">
    <property type="entry name" value="Dihydropteroate synthetase-like"/>
    <property type="match status" value="1"/>
</dbReference>
<dbReference type="SUPFAM" id="SSF82282">
    <property type="entry name" value="Homocysteine S-methyltransferase"/>
    <property type="match status" value="1"/>
</dbReference>
<dbReference type="SUPFAM" id="SSF56507">
    <property type="entry name" value="Methionine synthase activation domain-like"/>
    <property type="match status" value="1"/>
</dbReference>
<dbReference type="SUPFAM" id="SSF47644">
    <property type="entry name" value="Methionine synthase domain"/>
    <property type="match status" value="1"/>
</dbReference>
<dbReference type="PROSITE" id="PS50974">
    <property type="entry name" value="ADOMET_ACTIVATION"/>
    <property type="match status" value="1"/>
</dbReference>
<dbReference type="PROSITE" id="PS51332">
    <property type="entry name" value="B12_BINDING"/>
    <property type="match status" value="1"/>
</dbReference>
<dbReference type="PROSITE" id="PS51337">
    <property type="entry name" value="B12_BINDING_NTER"/>
    <property type="match status" value="1"/>
</dbReference>
<dbReference type="PROSITE" id="PS50970">
    <property type="entry name" value="HCY"/>
    <property type="match status" value="1"/>
</dbReference>
<dbReference type="PROSITE" id="PS50972">
    <property type="entry name" value="PTERIN_BINDING"/>
    <property type="match status" value="1"/>
</dbReference>
<gene>
    <name type="primary">metH</name>
    <name type="ordered locus">VP2717</name>
</gene>
<comment type="function">
    <text evidence="1">Catalyzes the transfer of a methyl group from methyl-cobalamin to homocysteine, yielding enzyme-bound cob(I)alamin and methionine. Subsequently, remethylates the cofactor using methyltetrahydrofolate (By similarity).</text>
</comment>
<comment type="catalytic activity">
    <reaction>
        <text>(6S)-5-methyl-5,6,7,8-tetrahydrofolate + L-homocysteine = (6S)-5,6,7,8-tetrahydrofolate + L-methionine</text>
        <dbReference type="Rhea" id="RHEA:11172"/>
        <dbReference type="ChEBI" id="CHEBI:18608"/>
        <dbReference type="ChEBI" id="CHEBI:57453"/>
        <dbReference type="ChEBI" id="CHEBI:57844"/>
        <dbReference type="ChEBI" id="CHEBI:58199"/>
        <dbReference type="EC" id="2.1.1.13"/>
    </reaction>
</comment>
<comment type="cofactor">
    <cofactor evidence="1">
        <name>methylcob(III)alamin</name>
        <dbReference type="ChEBI" id="CHEBI:28115"/>
    </cofactor>
</comment>
<comment type="cofactor">
    <cofactor evidence="1">
        <name>Zn(2+)</name>
        <dbReference type="ChEBI" id="CHEBI:29105"/>
    </cofactor>
    <text evidence="1">Binds 1 zinc ion per subunit.</text>
</comment>
<comment type="pathway">
    <text>Amino-acid biosynthesis; L-methionine biosynthesis via de novo pathway; L-methionine from L-homocysteine (MetH route): step 1/1.</text>
</comment>
<comment type="domain">
    <text evidence="1">Modular enzyme with four functionally distinct domains. The isolated Hcy-binding domain catalyzes methyl transfer from free methylcobalamin to homocysteine. The Hcy-binding domain in association with the pterin-binding domain catalyzes the methylation of cob(I)alamin by methyltetrahydrofolate and the methylation of homocysteine. The B12-binding domain binds the cofactor. The AdoMet activation domain binds S-adenosyl-L-methionine. Under aerobic conditions cob(I)alamin can be converted to inactive cob(II)alamin. Reductive methylation by S-adenosyl-L-methionine and flavodoxin regenerates methylcobalamin (By similarity).</text>
</comment>
<comment type="miscellaneous">
    <text evidence="1">L-homocysteine is bound via the zinc atom.</text>
</comment>
<comment type="similarity">
    <text evidence="8">Belongs to the vitamin-B12 dependent methionine synthase family.</text>
</comment>
<keyword id="KW-0028">Amino-acid biosynthesis</keyword>
<keyword id="KW-0846">Cobalamin</keyword>
<keyword id="KW-0170">Cobalt</keyword>
<keyword id="KW-0479">Metal-binding</keyword>
<keyword id="KW-0486">Methionine biosynthesis</keyword>
<keyword id="KW-0489">Methyltransferase</keyword>
<keyword id="KW-0677">Repeat</keyword>
<keyword id="KW-0949">S-adenosyl-L-methionine</keyword>
<keyword id="KW-0808">Transferase</keyword>
<keyword id="KW-0862">Zinc</keyword>
<protein>
    <recommendedName>
        <fullName>Methionine synthase</fullName>
        <ecNumber>2.1.1.13</ecNumber>
    </recommendedName>
    <alternativeName>
        <fullName>5-methyltetrahydrofolate--homocysteine methyltransferase</fullName>
    </alternativeName>
    <alternativeName>
        <fullName>Methionine synthase, vitamin-B12 dependent</fullName>
        <shortName>MS</shortName>
    </alternativeName>
</protein>
<evidence type="ECO:0000250" key="1"/>
<evidence type="ECO:0000250" key="2">
    <source>
        <dbReference type="UniProtKB" id="P13009"/>
    </source>
</evidence>
<evidence type="ECO:0000255" key="3">
    <source>
        <dbReference type="PROSITE-ProRule" id="PRU00333"/>
    </source>
</evidence>
<evidence type="ECO:0000255" key="4">
    <source>
        <dbReference type="PROSITE-ProRule" id="PRU00334"/>
    </source>
</evidence>
<evidence type="ECO:0000255" key="5">
    <source>
        <dbReference type="PROSITE-ProRule" id="PRU00346"/>
    </source>
</evidence>
<evidence type="ECO:0000255" key="6">
    <source>
        <dbReference type="PROSITE-ProRule" id="PRU00666"/>
    </source>
</evidence>
<evidence type="ECO:0000255" key="7">
    <source>
        <dbReference type="PROSITE-ProRule" id="PRU00667"/>
    </source>
</evidence>
<evidence type="ECO:0000305" key="8"/>
<reference key="1">
    <citation type="journal article" date="2003" name="Lancet">
        <title>Genome sequence of Vibrio parahaemolyticus: a pathogenic mechanism distinct from that of V. cholerae.</title>
        <authorList>
            <person name="Makino K."/>
            <person name="Oshima K."/>
            <person name="Kurokawa K."/>
            <person name="Yokoyama K."/>
            <person name="Uda T."/>
            <person name="Tagomori K."/>
            <person name="Iijima Y."/>
            <person name="Najima M."/>
            <person name="Nakano M."/>
            <person name="Yamashita A."/>
            <person name="Kubota Y."/>
            <person name="Kimura S."/>
            <person name="Yasunaga T."/>
            <person name="Honda T."/>
            <person name="Shinagawa H."/>
            <person name="Hattori M."/>
            <person name="Iida T."/>
        </authorList>
    </citation>
    <scope>NUCLEOTIDE SEQUENCE [LARGE SCALE GENOMIC DNA]</scope>
    <source>
        <strain>RIMD 2210633</strain>
    </source>
</reference>
<feature type="chain" id="PRO_0000204541" description="Methionine synthase">
    <location>
        <begin position="1"/>
        <end position="1226"/>
    </location>
</feature>
<feature type="domain" description="Hcy-binding" evidence="3">
    <location>
        <begin position="6"/>
        <end position="326"/>
    </location>
</feature>
<feature type="domain" description="Pterin-binding" evidence="4">
    <location>
        <begin position="357"/>
        <end position="618"/>
    </location>
</feature>
<feature type="domain" description="B12-binding N-terminal" evidence="7">
    <location>
        <begin position="651"/>
        <end position="745"/>
    </location>
</feature>
<feature type="domain" description="B12-binding" evidence="6">
    <location>
        <begin position="747"/>
        <end position="882"/>
    </location>
</feature>
<feature type="domain" description="AdoMet activation" evidence="5">
    <location>
        <begin position="898"/>
        <end position="1226"/>
    </location>
</feature>
<feature type="binding site" evidence="3">
    <location>
        <position position="248"/>
    </location>
    <ligand>
        <name>Zn(2+)</name>
        <dbReference type="ChEBI" id="CHEBI:29105"/>
    </ligand>
</feature>
<feature type="binding site" evidence="3">
    <location>
        <position position="311"/>
    </location>
    <ligand>
        <name>Zn(2+)</name>
        <dbReference type="ChEBI" id="CHEBI:29105"/>
    </ligand>
</feature>
<feature type="binding site" evidence="3">
    <location>
        <position position="312"/>
    </location>
    <ligand>
        <name>Zn(2+)</name>
        <dbReference type="ChEBI" id="CHEBI:29105"/>
    </ligand>
</feature>
<feature type="binding site" evidence="2">
    <location>
        <position position="695"/>
    </location>
    <ligand>
        <name>methylcob(III)alamin</name>
        <dbReference type="ChEBI" id="CHEBI:28115"/>
    </ligand>
</feature>
<feature type="binding site" evidence="2">
    <location>
        <begin position="757"/>
        <end position="761"/>
    </location>
    <ligand>
        <name>methylcob(III)alamin</name>
        <dbReference type="ChEBI" id="CHEBI:28115"/>
    </ligand>
</feature>
<feature type="binding site" description="axial binding residue" evidence="2">
    <location>
        <position position="760"/>
    </location>
    <ligand>
        <name>methylcob(III)alamin</name>
        <dbReference type="ChEBI" id="CHEBI:28115"/>
    </ligand>
    <ligandPart>
        <name>Co</name>
        <dbReference type="ChEBI" id="CHEBI:27638"/>
    </ligandPart>
</feature>
<feature type="binding site" evidence="2">
    <location>
        <position position="805"/>
    </location>
    <ligand>
        <name>methylcob(III)alamin</name>
        <dbReference type="ChEBI" id="CHEBI:28115"/>
    </ligand>
</feature>
<feature type="binding site" evidence="2">
    <location>
        <position position="809"/>
    </location>
    <ligand>
        <name>methylcob(III)alamin</name>
        <dbReference type="ChEBI" id="CHEBI:28115"/>
    </ligand>
</feature>
<feature type="binding site" evidence="2">
    <location>
        <position position="861"/>
    </location>
    <ligand>
        <name>methylcob(III)alamin</name>
        <dbReference type="ChEBI" id="CHEBI:28115"/>
    </ligand>
</feature>
<feature type="binding site" evidence="1">
    <location>
        <position position="948"/>
    </location>
    <ligand>
        <name>S-adenosyl-L-methionine</name>
        <dbReference type="ChEBI" id="CHEBI:59789"/>
    </ligand>
</feature>
<feature type="binding site" evidence="1">
    <location>
        <position position="1136"/>
    </location>
    <ligand>
        <name>S-adenosyl-L-methionine</name>
        <dbReference type="ChEBI" id="CHEBI:59789"/>
    </ligand>
</feature>
<feature type="binding site" evidence="1">
    <location>
        <begin position="1191"/>
        <end position="1192"/>
    </location>
    <ligand>
        <name>S-adenosyl-L-methionine</name>
        <dbReference type="ChEBI" id="CHEBI:59789"/>
    </ligand>
</feature>
<organism>
    <name type="scientific">Vibrio parahaemolyticus serotype O3:K6 (strain RIMD 2210633)</name>
    <dbReference type="NCBI Taxonomy" id="223926"/>
    <lineage>
        <taxon>Bacteria</taxon>
        <taxon>Pseudomonadati</taxon>
        <taxon>Pseudomonadota</taxon>
        <taxon>Gammaproteobacteria</taxon>
        <taxon>Vibrionales</taxon>
        <taxon>Vibrionaceae</taxon>
        <taxon>Vibrio</taxon>
    </lineage>
</organism>
<sequence>MGSKVRQQIEAQLKQRILLIDGGMGTMIQGYKLEEQDYRGERFANWHCDLKGNNDLLVLSQPQLIKEIHSAYLEAGADILETNTFNATTIAMADYEMESLSEEINFAAAKLAREVADEWTAKTPDKPRYVAGVLGPTNRTCSISPDVNDPGYRNVSFDELVEAYSESTRALIRGGADLILIETIFDTLNAKACAFAVDSVFEELGVALPVMISGTITDASGRTLSGQTTEAFYNSLRHVRPLSFGLNCALGPDELRPYVEELSRISESFVSAHPNAGLPNAFGEYDLSPEDMAEHVKEWASSGFLNLIGGCCGTTPEHIRQMAQAVEGVTPRALPDLPVACRLSGLEPLTIEKETLFINVGERTNVTGSARFKRLIKEEQYDEALEVARQQVENGAQIIDINMDEGMLDAQACMVRFLNLCASEPEISKVPIMVDSSKWEVIEAGLKCIQGKGIVNSISLKEGKEKFVEQAKLIRRYGAAVIVMAFDEVGQAETRTRKLEICTNAYRILVDEVGFPPEDIIFDPNIFAVATGIDEHNNYAVDFIEAVADIKRDLPHAMISGGVSNVSFSFRGNNYVREAIHAVFLYHCFKNGMDMGIVNAGQLEIYDNVPEKLREAVEDVVLNRRDDATERLLDIAAEYADKGVGKEEDASALEWRTWPVAKRLEHALVKGITEFIVADTEEARVNAVKPLEVIEGPLMDGMNVVGDLFGEGKMFLPQVVKSARVMKQAVAHLEPFINAEKQSGSSNGKILLATVKGDVHDIGKNIVGVVLQCNNYEIIDLGVMVPCEKILKVAIEENVDIIGLSGLITPSLDEMVHVAKEMERLNFDLPLLIGGATTSKAHTAVKIEQNYKNPVVYVNNASRAVGVCSSLLSDERRPAFIEKLDADYERVRDQHNRKKPRTKPVTLEQARANKVAIDWDAYTPPVPAKPGLHIFDDFDVATLRKYIDWTPFFMTWSLVGKYPTIFKHEEVGEEAQRLFHDANELLDRVEREGLLKARGICGLFPAASVGDDIEVYTDESRTEVAKVLRNLRQQTEKPKGFNYCLSDYIAPKESGKQDWVGAFAVTGGIGERELADEYKAQGDDYNAIMIQAVADRLAEAFAEYLHERVRKEIWGYAADENLSNDELIREKYQGIRPAPGYPACPEHTEKGPLWELLNVEENIGMSLTTSYAMYPGASVSGWYFSHPDSRYFAIAQIQDDQLESYADRKGWDRIEAEKWLGPNING</sequence>
<proteinExistence type="inferred from homology"/>